<reference key="1">
    <citation type="submission" date="2007-11" db="EMBL/GenBank/DDBJ databases">
        <title>Genome sequencing of phylogenetically and phenotypically diverse Coxiella burnetii isolates.</title>
        <authorList>
            <person name="Seshadri R."/>
            <person name="Samuel J.E."/>
        </authorList>
    </citation>
    <scope>NUCLEOTIDE SEQUENCE [LARGE SCALE GENOMIC DNA]</scope>
    <source>
        <strain>RSA 331 / Henzerling II</strain>
    </source>
</reference>
<accession>A9N8X5</accession>
<feature type="chain" id="PRO_1000076641" description="Triosephosphate isomerase">
    <location>
        <begin position="1"/>
        <end position="255"/>
    </location>
</feature>
<feature type="active site" description="Electrophile" evidence="1">
    <location>
        <position position="96"/>
    </location>
</feature>
<feature type="active site" description="Proton acceptor" evidence="1">
    <location>
        <position position="169"/>
    </location>
</feature>
<feature type="binding site" evidence="1">
    <location>
        <begin position="10"/>
        <end position="12"/>
    </location>
    <ligand>
        <name>substrate</name>
    </ligand>
</feature>
<feature type="binding site" evidence="1">
    <location>
        <position position="175"/>
    </location>
    <ligand>
        <name>substrate</name>
    </ligand>
</feature>
<feature type="binding site" evidence="1">
    <location>
        <position position="214"/>
    </location>
    <ligand>
        <name>substrate</name>
    </ligand>
</feature>
<feature type="binding site" evidence="1">
    <location>
        <begin position="235"/>
        <end position="236"/>
    </location>
    <ligand>
        <name>substrate</name>
    </ligand>
</feature>
<protein>
    <recommendedName>
        <fullName evidence="1">Triosephosphate isomerase</fullName>
        <shortName evidence="1">TIM</shortName>
        <shortName evidence="1">TPI</shortName>
        <ecNumber evidence="1">5.3.1.1</ecNumber>
    </recommendedName>
    <alternativeName>
        <fullName evidence="1">Triose-phosphate isomerase</fullName>
    </alternativeName>
</protein>
<dbReference type="EC" id="5.3.1.1" evidence="1"/>
<dbReference type="EMBL" id="CP000890">
    <property type="protein sequence ID" value="ABX79042.1"/>
    <property type="molecule type" value="Genomic_DNA"/>
</dbReference>
<dbReference type="RefSeq" id="WP_005769081.1">
    <property type="nucleotide sequence ID" value="NC_010117.1"/>
</dbReference>
<dbReference type="SMR" id="A9N8X5"/>
<dbReference type="KEGG" id="cbs:COXBURSA331_A1621"/>
<dbReference type="HOGENOM" id="CLU_024251_2_3_6"/>
<dbReference type="UniPathway" id="UPA00109">
    <property type="reaction ID" value="UER00189"/>
</dbReference>
<dbReference type="UniPathway" id="UPA00138"/>
<dbReference type="GO" id="GO:0005829">
    <property type="term" value="C:cytosol"/>
    <property type="evidence" value="ECO:0007669"/>
    <property type="project" value="TreeGrafter"/>
</dbReference>
<dbReference type="GO" id="GO:0004807">
    <property type="term" value="F:triose-phosphate isomerase activity"/>
    <property type="evidence" value="ECO:0007669"/>
    <property type="project" value="UniProtKB-UniRule"/>
</dbReference>
<dbReference type="GO" id="GO:0006094">
    <property type="term" value="P:gluconeogenesis"/>
    <property type="evidence" value="ECO:0007669"/>
    <property type="project" value="UniProtKB-UniRule"/>
</dbReference>
<dbReference type="GO" id="GO:0046166">
    <property type="term" value="P:glyceraldehyde-3-phosphate biosynthetic process"/>
    <property type="evidence" value="ECO:0007669"/>
    <property type="project" value="TreeGrafter"/>
</dbReference>
<dbReference type="GO" id="GO:0019563">
    <property type="term" value="P:glycerol catabolic process"/>
    <property type="evidence" value="ECO:0007669"/>
    <property type="project" value="TreeGrafter"/>
</dbReference>
<dbReference type="GO" id="GO:0006096">
    <property type="term" value="P:glycolytic process"/>
    <property type="evidence" value="ECO:0007669"/>
    <property type="project" value="UniProtKB-UniRule"/>
</dbReference>
<dbReference type="CDD" id="cd00311">
    <property type="entry name" value="TIM"/>
    <property type="match status" value="1"/>
</dbReference>
<dbReference type="FunFam" id="3.20.20.70:FF:000016">
    <property type="entry name" value="Triosephosphate isomerase"/>
    <property type="match status" value="1"/>
</dbReference>
<dbReference type="Gene3D" id="3.20.20.70">
    <property type="entry name" value="Aldolase class I"/>
    <property type="match status" value="1"/>
</dbReference>
<dbReference type="HAMAP" id="MF_00147_B">
    <property type="entry name" value="TIM_B"/>
    <property type="match status" value="1"/>
</dbReference>
<dbReference type="InterPro" id="IPR013785">
    <property type="entry name" value="Aldolase_TIM"/>
</dbReference>
<dbReference type="InterPro" id="IPR035990">
    <property type="entry name" value="TIM_sf"/>
</dbReference>
<dbReference type="InterPro" id="IPR022896">
    <property type="entry name" value="TrioseP_Isoase_bac/euk"/>
</dbReference>
<dbReference type="InterPro" id="IPR000652">
    <property type="entry name" value="Triosephosphate_isomerase"/>
</dbReference>
<dbReference type="InterPro" id="IPR020861">
    <property type="entry name" value="Triosephosphate_isomerase_AS"/>
</dbReference>
<dbReference type="NCBIfam" id="TIGR00419">
    <property type="entry name" value="tim"/>
    <property type="match status" value="1"/>
</dbReference>
<dbReference type="PANTHER" id="PTHR21139">
    <property type="entry name" value="TRIOSEPHOSPHATE ISOMERASE"/>
    <property type="match status" value="1"/>
</dbReference>
<dbReference type="PANTHER" id="PTHR21139:SF42">
    <property type="entry name" value="TRIOSEPHOSPHATE ISOMERASE"/>
    <property type="match status" value="1"/>
</dbReference>
<dbReference type="Pfam" id="PF00121">
    <property type="entry name" value="TIM"/>
    <property type="match status" value="1"/>
</dbReference>
<dbReference type="SUPFAM" id="SSF51351">
    <property type="entry name" value="Triosephosphate isomerase (TIM)"/>
    <property type="match status" value="1"/>
</dbReference>
<dbReference type="PROSITE" id="PS00171">
    <property type="entry name" value="TIM_1"/>
    <property type="match status" value="1"/>
</dbReference>
<dbReference type="PROSITE" id="PS51440">
    <property type="entry name" value="TIM_2"/>
    <property type="match status" value="1"/>
</dbReference>
<evidence type="ECO:0000255" key="1">
    <source>
        <dbReference type="HAMAP-Rule" id="MF_00147"/>
    </source>
</evidence>
<keyword id="KW-0963">Cytoplasm</keyword>
<keyword id="KW-0312">Gluconeogenesis</keyword>
<keyword id="KW-0324">Glycolysis</keyword>
<keyword id="KW-0413">Isomerase</keyword>
<comment type="function">
    <text evidence="1">Involved in the gluconeogenesis. Catalyzes stereospecifically the conversion of dihydroxyacetone phosphate (DHAP) to D-glyceraldehyde-3-phosphate (G3P).</text>
</comment>
<comment type="catalytic activity">
    <reaction evidence="1">
        <text>D-glyceraldehyde 3-phosphate = dihydroxyacetone phosphate</text>
        <dbReference type="Rhea" id="RHEA:18585"/>
        <dbReference type="ChEBI" id="CHEBI:57642"/>
        <dbReference type="ChEBI" id="CHEBI:59776"/>
        <dbReference type="EC" id="5.3.1.1"/>
    </reaction>
</comment>
<comment type="pathway">
    <text evidence="1">Carbohydrate biosynthesis; gluconeogenesis.</text>
</comment>
<comment type="pathway">
    <text evidence="1">Carbohydrate degradation; glycolysis; D-glyceraldehyde 3-phosphate from glycerone phosphate: step 1/1.</text>
</comment>
<comment type="subunit">
    <text evidence="1">Homodimer.</text>
</comment>
<comment type="subcellular location">
    <subcellularLocation>
        <location evidence="1">Cytoplasm</location>
    </subcellularLocation>
</comment>
<comment type="similarity">
    <text evidence="1">Belongs to the triosephosphate isomerase family.</text>
</comment>
<proteinExistence type="inferred from homology"/>
<organism>
    <name type="scientific">Coxiella burnetii (strain RSA 331 / Henzerling II)</name>
    <dbReference type="NCBI Taxonomy" id="360115"/>
    <lineage>
        <taxon>Bacteria</taxon>
        <taxon>Pseudomonadati</taxon>
        <taxon>Pseudomonadota</taxon>
        <taxon>Gammaproteobacteria</taxon>
        <taxon>Legionellales</taxon>
        <taxon>Coxiellaceae</taxon>
        <taxon>Coxiella</taxon>
    </lineage>
</organism>
<name>TPIS_COXBR</name>
<gene>
    <name evidence="1" type="primary">tpiA</name>
    <name type="ordered locus">COXBURSA331_A1621</name>
</gene>
<sequence>MQRRPLVAGNWKMHGSRESVGQLLRALKHGCERLETAELAVFPPFVFLQQCEEALMRTQISWGAQDVSEFERGAYTGEVSAAMLRDFHCRYVIVGHSERRQRHGETNEQVAAKVRAALRCGIRPIICVGETEKQRNANQTLSVIKEQLAVVLQMNDNLASLEGMVVAYEPIWAIGTGKNATPSQAEEVHAALRDQLHRQDATLAESTRLLYGGSVKPDNAAALFEMPNIDGALVGGASLEAEQFLKIGQQCNQSF</sequence>